<gene>
    <name type="ordered locus">plu4503</name>
</gene>
<protein>
    <recommendedName>
        <fullName evidence="1">UPF0213 protein plu4503</fullName>
    </recommendedName>
</protein>
<evidence type="ECO:0000255" key="1">
    <source>
        <dbReference type="HAMAP-Rule" id="MF_01029"/>
    </source>
</evidence>
<accession>Q7MZ08</accession>
<keyword id="KW-1185">Reference proteome</keyword>
<sequence>MAENQWVLYLLKTKSGMLYTGITTNIHRRFAQHENGKGAKSLRGKGPLQLVFSSYAGDRSNASQLEYQVKQLSKQQKERLVICQPVCIAEYLASIRNGQSVRSK</sequence>
<feature type="chain" id="PRO_0000161374" description="UPF0213 protein plu4503">
    <location>
        <begin position="1"/>
        <end position="104"/>
    </location>
</feature>
<feature type="domain" description="GIY-YIG" evidence="1">
    <location>
        <begin position="4"/>
        <end position="79"/>
    </location>
</feature>
<comment type="similarity">
    <text evidence="1">Belongs to the UPF0213 family.</text>
</comment>
<dbReference type="EMBL" id="BX571874">
    <property type="protein sequence ID" value="CAE16875.1"/>
    <property type="molecule type" value="Genomic_DNA"/>
</dbReference>
<dbReference type="RefSeq" id="WP_011148583.1">
    <property type="nucleotide sequence ID" value="NC_005126.1"/>
</dbReference>
<dbReference type="SMR" id="Q7MZ08"/>
<dbReference type="STRING" id="243265.plu4503"/>
<dbReference type="GeneID" id="48850711"/>
<dbReference type="KEGG" id="plu:plu4503"/>
<dbReference type="eggNOG" id="COG2827">
    <property type="taxonomic scope" value="Bacteria"/>
</dbReference>
<dbReference type="HOGENOM" id="CLU_135650_0_0_6"/>
<dbReference type="OrthoDB" id="9797095at2"/>
<dbReference type="Proteomes" id="UP000002514">
    <property type="component" value="Chromosome"/>
</dbReference>
<dbReference type="CDD" id="cd10456">
    <property type="entry name" value="GIY-YIG_UPF0213"/>
    <property type="match status" value="1"/>
</dbReference>
<dbReference type="Gene3D" id="3.40.1440.10">
    <property type="entry name" value="GIY-YIG endonuclease"/>
    <property type="match status" value="1"/>
</dbReference>
<dbReference type="HAMAP" id="MF_01029">
    <property type="entry name" value="UPF0213"/>
    <property type="match status" value="1"/>
</dbReference>
<dbReference type="InterPro" id="IPR000305">
    <property type="entry name" value="GIY-YIG_endonuc"/>
</dbReference>
<dbReference type="InterPro" id="IPR035901">
    <property type="entry name" value="GIY-YIG_endonuc_sf"/>
</dbReference>
<dbReference type="InterPro" id="IPR050190">
    <property type="entry name" value="UPF0213_domain"/>
</dbReference>
<dbReference type="InterPro" id="IPR022992">
    <property type="entry name" value="UPF0213_GIY-YIG_endonuc"/>
</dbReference>
<dbReference type="PANTHER" id="PTHR34477">
    <property type="entry name" value="UPF0213 PROTEIN YHBQ"/>
    <property type="match status" value="1"/>
</dbReference>
<dbReference type="PANTHER" id="PTHR34477:SF1">
    <property type="entry name" value="UPF0213 PROTEIN YHBQ"/>
    <property type="match status" value="1"/>
</dbReference>
<dbReference type="Pfam" id="PF01541">
    <property type="entry name" value="GIY-YIG"/>
    <property type="match status" value="1"/>
</dbReference>
<dbReference type="SUPFAM" id="SSF82771">
    <property type="entry name" value="GIY-YIG endonuclease"/>
    <property type="match status" value="1"/>
</dbReference>
<dbReference type="PROSITE" id="PS50164">
    <property type="entry name" value="GIY_YIG"/>
    <property type="match status" value="1"/>
</dbReference>
<organism>
    <name type="scientific">Photorhabdus laumondii subsp. laumondii (strain DSM 15139 / CIP 105565 / TT01)</name>
    <name type="common">Photorhabdus luminescens subsp. laumondii</name>
    <dbReference type="NCBI Taxonomy" id="243265"/>
    <lineage>
        <taxon>Bacteria</taxon>
        <taxon>Pseudomonadati</taxon>
        <taxon>Pseudomonadota</taxon>
        <taxon>Gammaproteobacteria</taxon>
        <taxon>Enterobacterales</taxon>
        <taxon>Morganellaceae</taxon>
        <taxon>Photorhabdus</taxon>
    </lineage>
</organism>
<name>Y4503_PHOLL</name>
<proteinExistence type="inferred from homology"/>
<reference key="1">
    <citation type="journal article" date="2003" name="Nat. Biotechnol.">
        <title>The genome sequence of the entomopathogenic bacterium Photorhabdus luminescens.</title>
        <authorList>
            <person name="Duchaud E."/>
            <person name="Rusniok C."/>
            <person name="Frangeul L."/>
            <person name="Buchrieser C."/>
            <person name="Givaudan A."/>
            <person name="Taourit S."/>
            <person name="Bocs S."/>
            <person name="Boursaux-Eude C."/>
            <person name="Chandler M."/>
            <person name="Charles J.-F."/>
            <person name="Dassa E."/>
            <person name="Derose R."/>
            <person name="Derzelle S."/>
            <person name="Freyssinet G."/>
            <person name="Gaudriault S."/>
            <person name="Medigue C."/>
            <person name="Lanois A."/>
            <person name="Powell K."/>
            <person name="Siguier P."/>
            <person name="Vincent R."/>
            <person name="Wingate V."/>
            <person name="Zouine M."/>
            <person name="Glaser P."/>
            <person name="Boemare N."/>
            <person name="Danchin A."/>
            <person name="Kunst F."/>
        </authorList>
    </citation>
    <scope>NUCLEOTIDE SEQUENCE [LARGE SCALE GENOMIC DNA]</scope>
    <source>
        <strain>DSM 15139 / CIP 105565 / TT01</strain>
    </source>
</reference>